<reference key="1">
    <citation type="submission" date="2006-04" db="EMBL/GenBank/DDBJ databases">
        <title>Complete sequence of chromosome of Deinococcus geothermalis DSM 11300.</title>
        <authorList>
            <person name="Copeland A."/>
            <person name="Lucas S."/>
            <person name="Lapidus A."/>
            <person name="Barry K."/>
            <person name="Detter J.C."/>
            <person name="Glavina del Rio T."/>
            <person name="Hammon N."/>
            <person name="Israni S."/>
            <person name="Dalin E."/>
            <person name="Tice H."/>
            <person name="Pitluck S."/>
            <person name="Brettin T."/>
            <person name="Bruce D."/>
            <person name="Han C."/>
            <person name="Tapia R."/>
            <person name="Saunders E."/>
            <person name="Gilna P."/>
            <person name="Schmutz J."/>
            <person name="Larimer F."/>
            <person name="Land M."/>
            <person name="Hauser L."/>
            <person name="Kyrpides N."/>
            <person name="Kim E."/>
            <person name="Daly M.J."/>
            <person name="Fredrickson J.K."/>
            <person name="Makarova K.S."/>
            <person name="Gaidamakova E.K."/>
            <person name="Zhai M."/>
            <person name="Richardson P."/>
        </authorList>
    </citation>
    <scope>NUCLEOTIDE SEQUENCE [LARGE SCALE GENOMIC DNA]</scope>
    <source>
        <strain>DSM 11300 / CIP 105573 / AG-3a</strain>
    </source>
</reference>
<comment type="function">
    <text evidence="1">Carrier of the growing fatty acid chain in fatty acid biosynthesis.</text>
</comment>
<comment type="pathway">
    <text evidence="1">Lipid metabolism; fatty acid biosynthesis.</text>
</comment>
<comment type="subcellular location">
    <subcellularLocation>
        <location evidence="1">Cytoplasm</location>
    </subcellularLocation>
</comment>
<comment type="PTM">
    <text evidence="1">4'-phosphopantetheine is transferred from CoA to a specific serine of apo-ACP by AcpS. This modification is essential for activity because fatty acids are bound in thioester linkage to the sulfhydryl of the prosthetic group.</text>
</comment>
<comment type="similarity">
    <text evidence="1">Belongs to the acyl carrier protein (ACP) family.</text>
</comment>
<feature type="chain" id="PRO_1000066599" description="Acyl carrier protein">
    <location>
        <begin position="1"/>
        <end position="76"/>
    </location>
</feature>
<feature type="domain" description="Carrier" evidence="2">
    <location>
        <begin position="1"/>
        <end position="76"/>
    </location>
</feature>
<feature type="modified residue" description="O-(pantetheine 4'-phosphoryl)serine" evidence="2">
    <location>
        <position position="36"/>
    </location>
</feature>
<name>ACP_DEIGD</name>
<protein>
    <recommendedName>
        <fullName evidence="1">Acyl carrier protein</fullName>
        <shortName evidence="1">ACP</shortName>
    </recommendedName>
</protein>
<evidence type="ECO:0000255" key="1">
    <source>
        <dbReference type="HAMAP-Rule" id="MF_01217"/>
    </source>
</evidence>
<evidence type="ECO:0000255" key="2">
    <source>
        <dbReference type="PROSITE-ProRule" id="PRU00258"/>
    </source>
</evidence>
<organism>
    <name type="scientific">Deinococcus geothermalis (strain DSM 11300 / CIP 105573 / AG-3a)</name>
    <dbReference type="NCBI Taxonomy" id="319795"/>
    <lineage>
        <taxon>Bacteria</taxon>
        <taxon>Thermotogati</taxon>
        <taxon>Deinococcota</taxon>
        <taxon>Deinococci</taxon>
        <taxon>Deinococcales</taxon>
        <taxon>Deinococcaceae</taxon>
        <taxon>Deinococcus</taxon>
    </lineage>
</organism>
<proteinExistence type="inferred from homology"/>
<dbReference type="EMBL" id="CP000359">
    <property type="protein sequence ID" value="ABF44739.1"/>
    <property type="molecule type" value="Genomic_DNA"/>
</dbReference>
<dbReference type="RefSeq" id="WP_011529582.1">
    <property type="nucleotide sequence ID" value="NC_008025.1"/>
</dbReference>
<dbReference type="SMR" id="Q1J195"/>
<dbReference type="STRING" id="319795.Dgeo_0436"/>
<dbReference type="KEGG" id="dge:Dgeo_0436"/>
<dbReference type="eggNOG" id="COG0236">
    <property type="taxonomic scope" value="Bacteria"/>
</dbReference>
<dbReference type="HOGENOM" id="CLU_108696_5_1_0"/>
<dbReference type="UniPathway" id="UPA00094"/>
<dbReference type="Proteomes" id="UP000002431">
    <property type="component" value="Chromosome"/>
</dbReference>
<dbReference type="GO" id="GO:0005829">
    <property type="term" value="C:cytosol"/>
    <property type="evidence" value="ECO:0007669"/>
    <property type="project" value="TreeGrafter"/>
</dbReference>
<dbReference type="GO" id="GO:0016020">
    <property type="term" value="C:membrane"/>
    <property type="evidence" value="ECO:0007669"/>
    <property type="project" value="GOC"/>
</dbReference>
<dbReference type="GO" id="GO:0000035">
    <property type="term" value="F:acyl binding"/>
    <property type="evidence" value="ECO:0007669"/>
    <property type="project" value="TreeGrafter"/>
</dbReference>
<dbReference type="GO" id="GO:0000036">
    <property type="term" value="F:acyl carrier activity"/>
    <property type="evidence" value="ECO:0007669"/>
    <property type="project" value="UniProtKB-UniRule"/>
</dbReference>
<dbReference type="GO" id="GO:0009245">
    <property type="term" value="P:lipid A biosynthetic process"/>
    <property type="evidence" value="ECO:0007669"/>
    <property type="project" value="TreeGrafter"/>
</dbReference>
<dbReference type="Gene3D" id="1.10.1200.10">
    <property type="entry name" value="ACP-like"/>
    <property type="match status" value="1"/>
</dbReference>
<dbReference type="HAMAP" id="MF_01217">
    <property type="entry name" value="Acyl_carrier"/>
    <property type="match status" value="1"/>
</dbReference>
<dbReference type="InterPro" id="IPR003231">
    <property type="entry name" value="ACP"/>
</dbReference>
<dbReference type="InterPro" id="IPR036736">
    <property type="entry name" value="ACP-like_sf"/>
</dbReference>
<dbReference type="InterPro" id="IPR009081">
    <property type="entry name" value="PP-bd_ACP"/>
</dbReference>
<dbReference type="InterPro" id="IPR006162">
    <property type="entry name" value="Ppantetheine_attach_site"/>
</dbReference>
<dbReference type="NCBIfam" id="TIGR00517">
    <property type="entry name" value="acyl_carrier"/>
    <property type="match status" value="1"/>
</dbReference>
<dbReference type="NCBIfam" id="NF002148">
    <property type="entry name" value="PRK00982.1-2"/>
    <property type="match status" value="1"/>
</dbReference>
<dbReference type="NCBIfam" id="NF002149">
    <property type="entry name" value="PRK00982.1-3"/>
    <property type="match status" value="1"/>
</dbReference>
<dbReference type="NCBIfam" id="NF002150">
    <property type="entry name" value="PRK00982.1-4"/>
    <property type="match status" value="1"/>
</dbReference>
<dbReference type="NCBIfam" id="NF002151">
    <property type="entry name" value="PRK00982.1-5"/>
    <property type="match status" value="1"/>
</dbReference>
<dbReference type="PANTHER" id="PTHR20863">
    <property type="entry name" value="ACYL CARRIER PROTEIN"/>
    <property type="match status" value="1"/>
</dbReference>
<dbReference type="PANTHER" id="PTHR20863:SF76">
    <property type="entry name" value="CARRIER DOMAIN-CONTAINING PROTEIN"/>
    <property type="match status" value="1"/>
</dbReference>
<dbReference type="Pfam" id="PF00550">
    <property type="entry name" value="PP-binding"/>
    <property type="match status" value="1"/>
</dbReference>
<dbReference type="SUPFAM" id="SSF47336">
    <property type="entry name" value="ACP-like"/>
    <property type="match status" value="1"/>
</dbReference>
<dbReference type="PROSITE" id="PS50075">
    <property type="entry name" value="CARRIER"/>
    <property type="match status" value="1"/>
</dbReference>
<dbReference type="PROSITE" id="PS00012">
    <property type="entry name" value="PHOSPHOPANTETHEINE"/>
    <property type="match status" value="1"/>
</dbReference>
<sequence length="76" mass="8305">MATFDEVKEVIVDKLGVDADKVTPEARFVEDLGADSLETVELIMGLEDKFGISISDEDAEKIRTVQAAVDYIGSKQ</sequence>
<keyword id="KW-0963">Cytoplasm</keyword>
<keyword id="KW-0275">Fatty acid biosynthesis</keyword>
<keyword id="KW-0276">Fatty acid metabolism</keyword>
<keyword id="KW-0444">Lipid biosynthesis</keyword>
<keyword id="KW-0443">Lipid metabolism</keyword>
<keyword id="KW-0596">Phosphopantetheine</keyword>
<keyword id="KW-0597">Phosphoprotein</keyword>
<accession>Q1J195</accession>
<gene>
    <name evidence="1" type="primary">acpP</name>
    <name type="ordered locus">Dgeo_0436</name>
</gene>